<protein>
    <recommendedName>
        <fullName evidence="1">Methionyl-tRNA formyltransferase</fullName>
        <ecNumber evidence="1">2.1.2.9</ecNumber>
    </recommendedName>
</protein>
<accession>Q050Y2</accession>
<organism>
    <name type="scientific">Leptospira borgpetersenii serovar Hardjo-bovis (strain L550)</name>
    <dbReference type="NCBI Taxonomy" id="355276"/>
    <lineage>
        <taxon>Bacteria</taxon>
        <taxon>Pseudomonadati</taxon>
        <taxon>Spirochaetota</taxon>
        <taxon>Spirochaetia</taxon>
        <taxon>Leptospirales</taxon>
        <taxon>Leptospiraceae</taxon>
        <taxon>Leptospira</taxon>
    </lineage>
</organism>
<dbReference type="EC" id="2.1.2.9" evidence="1"/>
<dbReference type="EMBL" id="CP000348">
    <property type="protein sequence ID" value="ABJ79113.1"/>
    <property type="molecule type" value="Genomic_DNA"/>
</dbReference>
<dbReference type="RefSeq" id="WP_011670259.1">
    <property type="nucleotide sequence ID" value="NC_008508.1"/>
</dbReference>
<dbReference type="SMR" id="Q050Y2"/>
<dbReference type="KEGG" id="lbl:LBL_1663"/>
<dbReference type="HOGENOM" id="CLU_033347_1_1_12"/>
<dbReference type="GO" id="GO:0005829">
    <property type="term" value="C:cytosol"/>
    <property type="evidence" value="ECO:0007669"/>
    <property type="project" value="TreeGrafter"/>
</dbReference>
<dbReference type="GO" id="GO:0004479">
    <property type="term" value="F:methionyl-tRNA formyltransferase activity"/>
    <property type="evidence" value="ECO:0007669"/>
    <property type="project" value="UniProtKB-UniRule"/>
</dbReference>
<dbReference type="CDD" id="cd08646">
    <property type="entry name" value="FMT_core_Met-tRNA-FMT_N"/>
    <property type="match status" value="1"/>
</dbReference>
<dbReference type="CDD" id="cd08704">
    <property type="entry name" value="Met_tRNA_FMT_C"/>
    <property type="match status" value="1"/>
</dbReference>
<dbReference type="Gene3D" id="3.10.25.10">
    <property type="entry name" value="Formyl transferase, C-terminal domain"/>
    <property type="match status" value="1"/>
</dbReference>
<dbReference type="Gene3D" id="3.40.50.170">
    <property type="entry name" value="Formyl transferase, N-terminal domain"/>
    <property type="match status" value="1"/>
</dbReference>
<dbReference type="HAMAP" id="MF_00182">
    <property type="entry name" value="Formyl_trans"/>
    <property type="match status" value="1"/>
</dbReference>
<dbReference type="InterPro" id="IPR005794">
    <property type="entry name" value="Fmt"/>
</dbReference>
<dbReference type="InterPro" id="IPR005793">
    <property type="entry name" value="Formyl_trans_C"/>
</dbReference>
<dbReference type="InterPro" id="IPR037022">
    <property type="entry name" value="Formyl_trans_C_sf"/>
</dbReference>
<dbReference type="InterPro" id="IPR002376">
    <property type="entry name" value="Formyl_transf_N"/>
</dbReference>
<dbReference type="InterPro" id="IPR036477">
    <property type="entry name" value="Formyl_transf_N_sf"/>
</dbReference>
<dbReference type="InterPro" id="IPR011034">
    <property type="entry name" value="Formyl_transferase-like_C_sf"/>
</dbReference>
<dbReference type="InterPro" id="IPR044135">
    <property type="entry name" value="Met-tRNA-FMT_C"/>
</dbReference>
<dbReference type="InterPro" id="IPR041711">
    <property type="entry name" value="Met-tRNA-FMT_N"/>
</dbReference>
<dbReference type="NCBIfam" id="TIGR00460">
    <property type="entry name" value="fmt"/>
    <property type="match status" value="1"/>
</dbReference>
<dbReference type="PANTHER" id="PTHR11138">
    <property type="entry name" value="METHIONYL-TRNA FORMYLTRANSFERASE"/>
    <property type="match status" value="1"/>
</dbReference>
<dbReference type="PANTHER" id="PTHR11138:SF5">
    <property type="entry name" value="METHIONYL-TRNA FORMYLTRANSFERASE, MITOCHONDRIAL"/>
    <property type="match status" value="1"/>
</dbReference>
<dbReference type="Pfam" id="PF02911">
    <property type="entry name" value="Formyl_trans_C"/>
    <property type="match status" value="1"/>
</dbReference>
<dbReference type="Pfam" id="PF00551">
    <property type="entry name" value="Formyl_trans_N"/>
    <property type="match status" value="1"/>
</dbReference>
<dbReference type="SUPFAM" id="SSF50486">
    <property type="entry name" value="FMT C-terminal domain-like"/>
    <property type="match status" value="1"/>
</dbReference>
<dbReference type="SUPFAM" id="SSF53328">
    <property type="entry name" value="Formyltransferase"/>
    <property type="match status" value="1"/>
</dbReference>
<sequence>MKIGYFGTPEHSAKLLKALIDSTLAEVLFVVTNPDRPKGRNKKTEAGPVKKTALEHHIPVFQYESIKREKEKALSDFGSFPADLYVVFAYGSILPKEVYECPPLSSINLHGSLLPDLRGASPVQTALWKGYSASGITIQYIGEKMDEGDILLSQKIDIIPEDNTETLMNKITDAGTESILRLLKAYDGKPFPAIPQNHAKATYCGKIKSEDRILDWSLGAEELHNRIRALYPDAIATTRFREKRIGILKTKLSSLSIESNPEPGKLKRLDKKGLLTQCGDGRFLEILELQPENKNRMSASDFLNGFRIQEGETFG</sequence>
<keyword id="KW-0648">Protein biosynthesis</keyword>
<keyword id="KW-0808">Transferase</keyword>
<feature type="chain" id="PRO_1000020093" description="Methionyl-tRNA formyltransferase">
    <location>
        <begin position="1"/>
        <end position="315"/>
    </location>
</feature>
<feature type="binding site" evidence="1">
    <location>
        <begin position="112"/>
        <end position="115"/>
    </location>
    <ligand>
        <name>(6S)-5,6,7,8-tetrahydrofolate</name>
        <dbReference type="ChEBI" id="CHEBI:57453"/>
    </ligand>
</feature>
<proteinExistence type="inferred from homology"/>
<gene>
    <name evidence="1" type="primary">fmt</name>
    <name type="ordered locus">LBL_1663</name>
</gene>
<evidence type="ECO:0000255" key="1">
    <source>
        <dbReference type="HAMAP-Rule" id="MF_00182"/>
    </source>
</evidence>
<comment type="function">
    <text evidence="1">Attaches a formyl group to the free amino group of methionyl-tRNA(fMet). The formyl group appears to play a dual role in the initiator identity of N-formylmethionyl-tRNA by promoting its recognition by IF2 and preventing the misappropriation of this tRNA by the elongation apparatus.</text>
</comment>
<comment type="catalytic activity">
    <reaction evidence="1">
        <text>L-methionyl-tRNA(fMet) + (6R)-10-formyltetrahydrofolate = N-formyl-L-methionyl-tRNA(fMet) + (6S)-5,6,7,8-tetrahydrofolate + H(+)</text>
        <dbReference type="Rhea" id="RHEA:24380"/>
        <dbReference type="Rhea" id="RHEA-COMP:9952"/>
        <dbReference type="Rhea" id="RHEA-COMP:9953"/>
        <dbReference type="ChEBI" id="CHEBI:15378"/>
        <dbReference type="ChEBI" id="CHEBI:57453"/>
        <dbReference type="ChEBI" id="CHEBI:78530"/>
        <dbReference type="ChEBI" id="CHEBI:78844"/>
        <dbReference type="ChEBI" id="CHEBI:195366"/>
        <dbReference type="EC" id="2.1.2.9"/>
    </reaction>
</comment>
<comment type="similarity">
    <text evidence="1">Belongs to the Fmt family.</text>
</comment>
<name>FMT_LEPBL</name>
<reference key="1">
    <citation type="journal article" date="2006" name="Proc. Natl. Acad. Sci. U.S.A.">
        <title>Genome reduction in Leptospira borgpetersenii reflects limited transmission potential.</title>
        <authorList>
            <person name="Bulach D.M."/>
            <person name="Zuerner R.L."/>
            <person name="Wilson P."/>
            <person name="Seemann T."/>
            <person name="McGrath A."/>
            <person name="Cullen P.A."/>
            <person name="Davis J."/>
            <person name="Johnson M."/>
            <person name="Kuczek E."/>
            <person name="Alt D.P."/>
            <person name="Peterson-Burch B."/>
            <person name="Coppel R.L."/>
            <person name="Rood J.I."/>
            <person name="Davies J.K."/>
            <person name="Adler B."/>
        </authorList>
    </citation>
    <scope>NUCLEOTIDE SEQUENCE [LARGE SCALE GENOMIC DNA]</scope>
    <source>
        <strain>L550</strain>
    </source>
</reference>